<gene>
    <name type="primary">axeA</name>
    <name type="synonym">aceA</name>
    <name type="synonym">AoaxeA</name>
    <name type="ORF">AO090011000745</name>
</gene>
<dbReference type="EC" id="3.1.1.72"/>
<dbReference type="EMBL" id="AB167976">
    <property type="protein sequence ID" value="BAD12626.1"/>
    <property type="molecule type" value="Genomic_DNA"/>
</dbReference>
<dbReference type="EMBL" id="BA000055">
    <property type="protein sequence ID" value="BAE65196.1"/>
    <property type="molecule type" value="Genomic_DNA"/>
</dbReference>
<dbReference type="RefSeq" id="XP_001826329.1">
    <property type="nucleotide sequence ID" value="XM_001826277.2"/>
</dbReference>
<dbReference type="SMR" id="Q75P26"/>
<dbReference type="STRING" id="510516.Q75P26"/>
<dbReference type="ESTHER" id="aspor-axe1">
    <property type="family name" value="Esterase_phb"/>
</dbReference>
<dbReference type="GlyCosmos" id="Q75P26">
    <property type="glycosylation" value="2 sites, No reported glycans"/>
</dbReference>
<dbReference type="EnsemblFungi" id="BAE65196">
    <property type="protein sequence ID" value="BAE65196"/>
    <property type="gene ID" value="AO090011000745"/>
</dbReference>
<dbReference type="GeneID" id="5998432"/>
<dbReference type="KEGG" id="aor:AO090011000745"/>
<dbReference type="VEuPathDB" id="FungiDB:AO090011000745"/>
<dbReference type="HOGENOM" id="CLU_027551_1_1_1"/>
<dbReference type="OMA" id="WGPNLQG"/>
<dbReference type="OrthoDB" id="40537at5052"/>
<dbReference type="BRENDA" id="3.1.1.72">
    <property type="organism ID" value="522"/>
</dbReference>
<dbReference type="BRENDA" id="3.1.1.73">
    <property type="organism ID" value="522"/>
</dbReference>
<dbReference type="UniPathway" id="UPA00114"/>
<dbReference type="Proteomes" id="UP000006564">
    <property type="component" value="Chromosome 7"/>
</dbReference>
<dbReference type="GO" id="GO:0005576">
    <property type="term" value="C:extracellular region"/>
    <property type="evidence" value="ECO:0007669"/>
    <property type="project" value="UniProtKB-SubCell"/>
</dbReference>
<dbReference type="GO" id="GO:0046555">
    <property type="term" value="F:acetylxylan esterase activity"/>
    <property type="evidence" value="ECO:0000314"/>
    <property type="project" value="AspGD"/>
</dbReference>
<dbReference type="GO" id="GO:0030245">
    <property type="term" value="P:cellulose catabolic process"/>
    <property type="evidence" value="ECO:0007669"/>
    <property type="project" value="UniProtKB-KW"/>
</dbReference>
<dbReference type="GO" id="GO:0045493">
    <property type="term" value="P:xylan catabolic process"/>
    <property type="evidence" value="ECO:0000314"/>
    <property type="project" value="AspGD"/>
</dbReference>
<dbReference type="FunFam" id="3.40.50.1820:FF:000203">
    <property type="entry name" value="Feruloyl esterase B"/>
    <property type="match status" value="1"/>
</dbReference>
<dbReference type="Gene3D" id="3.40.50.1820">
    <property type="entry name" value="alpha/beta hydrolase"/>
    <property type="match status" value="1"/>
</dbReference>
<dbReference type="InterPro" id="IPR029058">
    <property type="entry name" value="AB_hydrolase_fold"/>
</dbReference>
<dbReference type="InterPro" id="IPR010126">
    <property type="entry name" value="Esterase_phb"/>
</dbReference>
<dbReference type="InterPro" id="IPR050955">
    <property type="entry name" value="Plant_Biomass_Hydrol_Est"/>
</dbReference>
<dbReference type="NCBIfam" id="TIGR01840">
    <property type="entry name" value="esterase_phb"/>
    <property type="match status" value="1"/>
</dbReference>
<dbReference type="PANTHER" id="PTHR43037:SF5">
    <property type="entry name" value="FERULOYL ESTERASE"/>
    <property type="match status" value="1"/>
</dbReference>
<dbReference type="PANTHER" id="PTHR43037">
    <property type="entry name" value="UNNAMED PRODUCT-RELATED"/>
    <property type="match status" value="1"/>
</dbReference>
<dbReference type="Pfam" id="PF10503">
    <property type="entry name" value="Esterase_PHB"/>
    <property type="match status" value="1"/>
</dbReference>
<dbReference type="SUPFAM" id="SSF53474">
    <property type="entry name" value="alpha/beta-Hydrolases"/>
    <property type="match status" value="2"/>
</dbReference>
<comment type="function">
    <text evidence="3">Acetylxylan esterase involved in the hydrolysis of xylan, a major structural heterogeneous polysaccharide found in plant biomass representing the second most abundant polysaccharide in the biosphere, after cellulose. Degrades acetylated xylans by cleaving acetyl side groups from the hetero-xylan backbone. Displays the greatest hydrolytic activity toward alpha-naphthylacetate (C2), lower activity toward alpha-naphthylpropionate (C3) and no detectable activity toward acyl-chain substrates containing four or more carbon atoms.</text>
</comment>
<comment type="catalytic activity">
    <reaction>
        <text>Deacetylation of xylans and xylo-oligosaccharides.</text>
        <dbReference type="EC" id="3.1.1.72"/>
    </reaction>
</comment>
<comment type="biophysicochemical properties">
    <phDependence>
        <text evidence="3">Optimum pH is 6.0. The enzyme is stable between pH 6.0 and 7.0.</text>
    </phDependence>
    <temperatureDependence>
        <text evidence="3">Optimum temperature is 45 degrees Celsius. Unstable at 40 degrees Celsius with a half life of less than 60 minutes at 40 degrees Celsius and 10 minutes at 50 degrees Celsius.</text>
    </temperatureDependence>
</comment>
<comment type="pathway">
    <text>Glycan degradation; xylan degradation.</text>
</comment>
<comment type="subunit">
    <text evidence="1">Monomer.</text>
</comment>
<comment type="subcellular location">
    <subcellularLocation>
        <location evidence="1">Secreted</location>
    </subcellularLocation>
</comment>
<comment type="similarity">
    <text evidence="4">Belongs to the carbohydrate esterase 1 (CE1) family. AxeA subfamily.</text>
</comment>
<comment type="caution">
    <text evidence="4">The C-terminal carbohydrate-binding module (CBM) extension found in soem acetylxylan esterases from other species is absent.</text>
</comment>
<proteinExistence type="evidence at protein level"/>
<accession>Q75P26</accession>
<evidence type="ECO:0000250" key="1"/>
<evidence type="ECO:0000255" key="2"/>
<evidence type="ECO:0000269" key="3">
    <source ref="1"/>
</evidence>
<evidence type="ECO:0000305" key="4"/>
<feature type="signal peptide" evidence="2">
    <location>
        <begin position="1"/>
        <end position="19"/>
    </location>
</feature>
<feature type="chain" id="PRO_0000393480" description="Acetylxylan esterase A">
    <location>
        <begin position="20"/>
        <end position="307"/>
    </location>
</feature>
<feature type="active site" description="Charge relay system" evidence="1">
    <location>
        <position position="150"/>
    </location>
</feature>
<feature type="glycosylation site" description="N-linked (GlcNAc...) asparagine" evidence="2">
    <location>
        <position position="192"/>
    </location>
</feature>
<feature type="glycosylation site" description="N-linked (GlcNAc...) asparagine" evidence="2">
    <location>
        <position position="270"/>
    </location>
</feature>
<protein>
    <recommendedName>
        <fullName>Acetylxylan esterase A</fullName>
        <ecNumber>3.1.1.72</ecNumber>
    </recommendedName>
</protein>
<reference key="1">
    <citation type="journal article" date="2006" name="J. Biotechnol.">
        <title>An Aspergillus oryzae acetyl xylan esterase: Molecular cloning and characteristics of recombinant enzyme expressed in Pichia pastoris.</title>
        <authorList>
            <person name="Koseki T."/>
            <person name="Miwa Y."/>
            <person name="Akao T."/>
            <person name="Akita O."/>
            <person name="Hashizume K."/>
        </authorList>
    </citation>
    <scope>NUCLEOTIDE SEQUENCE [GENOMIC DNA]</scope>
    <scope>FUNCTION</scope>
    <scope>BIOPHYSICOCHEMICAL PROPERTIES</scope>
</reference>
<reference key="2">
    <citation type="journal article" date="2005" name="Nature">
        <title>Genome sequencing and analysis of Aspergillus oryzae.</title>
        <authorList>
            <person name="Machida M."/>
            <person name="Asai K."/>
            <person name="Sano M."/>
            <person name="Tanaka T."/>
            <person name="Kumagai T."/>
            <person name="Terai G."/>
            <person name="Kusumoto K."/>
            <person name="Arima T."/>
            <person name="Akita O."/>
            <person name="Kashiwagi Y."/>
            <person name="Abe K."/>
            <person name="Gomi K."/>
            <person name="Horiuchi H."/>
            <person name="Kitamoto K."/>
            <person name="Kobayashi T."/>
            <person name="Takeuchi M."/>
            <person name="Denning D.W."/>
            <person name="Galagan J.E."/>
            <person name="Nierman W.C."/>
            <person name="Yu J."/>
            <person name="Archer D.B."/>
            <person name="Bennett J.W."/>
            <person name="Bhatnagar D."/>
            <person name="Cleveland T.E."/>
            <person name="Fedorova N.D."/>
            <person name="Gotoh O."/>
            <person name="Horikawa H."/>
            <person name="Hosoyama A."/>
            <person name="Ichinomiya M."/>
            <person name="Igarashi R."/>
            <person name="Iwashita K."/>
            <person name="Juvvadi P.R."/>
            <person name="Kato M."/>
            <person name="Kato Y."/>
            <person name="Kin T."/>
            <person name="Kokubun A."/>
            <person name="Maeda H."/>
            <person name="Maeyama N."/>
            <person name="Maruyama J."/>
            <person name="Nagasaki H."/>
            <person name="Nakajima T."/>
            <person name="Oda K."/>
            <person name="Okada K."/>
            <person name="Paulsen I."/>
            <person name="Sakamoto K."/>
            <person name="Sawano T."/>
            <person name="Takahashi M."/>
            <person name="Takase K."/>
            <person name="Terabayashi Y."/>
            <person name="Wortman J.R."/>
            <person name="Yamada O."/>
            <person name="Yamagata Y."/>
            <person name="Anazawa H."/>
            <person name="Hata Y."/>
            <person name="Koide Y."/>
            <person name="Komori T."/>
            <person name="Koyama Y."/>
            <person name="Minetoki T."/>
            <person name="Suharnan S."/>
            <person name="Tanaka A."/>
            <person name="Isono K."/>
            <person name="Kuhara S."/>
            <person name="Ogasawara N."/>
            <person name="Kikuchi H."/>
        </authorList>
    </citation>
    <scope>NUCLEOTIDE SEQUENCE [LARGE SCALE GENOMIC DNA]</scope>
    <source>
        <strain>ATCC 42149 / RIB 40</strain>
    </source>
</reference>
<keyword id="KW-0119">Carbohydrate metabolism</keyword>
<keyword id="KW-0136">Cellulose degradation</keyword>
<keyword id="KW-0325">Glycoprotein</keyword>
<keyword id="KW-0378">Hydrolase</keyword>
<keyword id="KW-0624">Polysaccharide degradation</keyword>
<keyword id="KW-1185">Reference proteome</keyword>
<keyword id="KW-0964">Secreted</keyword>
<keyword id="KW-0719">Serine esterase</keyword>
<keyword id="KW-0732">Signal</keyword>
<name>AXE1_ASPOR</name>
<organism>
    <name type="scientific">Aspergillus oryzae (strain ATCC 42149 / RIB 40)</name>
    <name type="common">Yellow koji mold</name>
    <dbReference type="NCBI Taxonomy" id="510516"/>
    <lineage>
        <taxon>Eukaryota</taxon>
        <taxon>Fungi</taxon>
        <taxon>Dikarya</taxon>
        <taxon>Ascomycota</taxon>
        <taxon>Pezizomycotina</taxon>
        <taxon>Eurotiomycetes</taxon>
        <taxon>Eurotiomycetidae</taxon>
        <taxon>Eurotiales</taxon>
        <taxon>Aspergillaceae</taxon>
        <taxon>Aspergillus</taxon>
        <taxon>Aspergillus subgen. Circumdati</taxon>
    </lineage>
</organism>
<sequence>MILLSYLLTYLLCALTCSARAIHNGRSLIPRAGSLEQVTDFGDNPSNVKMYIYVPTNLASNPGIIVAIHYCTGTAQAYYQGSPYAQLAETHGFIVIYPESPYEGTCWDVSSQATLTHNGGGNSNSIANMVTWTTKQYNADSSKVFVTGTSSGAMMTNVMAATYPNLFAAGVAYAGVPAGCFLSTADQPDAWNSTCAQGQSITTPEHWASIAEAMYPDYSGSRPKMQIYHGNVDTTLYPQNYEETCKQWAGVFGYNYDAPESTESNTPEANWSRTTWGPNLQGILAGGVGHNIQIHGDEDMKWFGFTN</sequence>